<keyword id="KW-0002">3D-structure</keyword>
<keyword id="KW-0378">Hydrolase</keyword>
<keyword id="KW-0540">Nuclease</keyword>
<keyword id="KW-1185">Reference proteome</keyword>
<keyword id="KW-0694">RNA-binding</keyword>
<keyword id="KW-0843">Virulence</keyword>
<feature type="chain" id="PRO_0000217272" description="Endoribonuclease VapD">
    <location>
        <begin position="1"/>
        <end position="94"/>
    </location>
</feature>
<feature type="mutagenesis site" description="Significantly reduced ribonuclease activity." evidence="1">
    <original>D</original>
    <variation>A</variation>
    <location>
        <position position="7"/>
    </location>
</feature>
<feature type="mutagenesis site" description="Nearly complete loss of ribonuclease activity." evidence="1">
    <original>L</original>
    <variation>A</variation>
    <location>
        <position position="13"/>
    </location>
</feature>
<feature type="mutagenesis site" description="Protein unstable." evidence="1">
    <original>F</original>
    <variation>A</variation>
    <location>
        <position position="37"/>
    </location>
</feature>
<feature type="mutagenesis site" description="Nearly complete loss of ribonuclease activity." evidence="1">
    <original>S</original>
    <variation>A</variation>
    <location>
        <position position="43"/>
    </location>
</feature>
<feature type="mutagenesis site" description="Protein unstable." evidence="1">
    <original>V</original>
    <variation>A</variation>
    <location>
        <position position="74"/>
    </location>
</feature>
<feature type="mutagenesis site" description="Significantly reduced ribonuclease activity." evidence="1">
    <original>D</original>
    <variation>A</variation>
    <location>
        <position position="76"/>
    </location>
</feature>
<feature type="sequence conflict" description="In Ref. 1; AAC45241." evidence="2" ref="1">
    <original>G</original>
    <variation>K</variation>
    <location>
        <position position="18"/>
    </location>
</feature>
<feature type="sequence conflict" description="In Ref. 1; AAC45241." evidence="2" ref="1">
    <original>W</original>
    <variation>N</variation>
    <location>
        <position position="39"/>
    </location>
</feature>
<feature type="strand" evidence="3">
    <location>
        <begin position="1"/>
        <end position="8"/>
    </location>
</feature>
<feature type="helix" evidence="3">
    <location>
        <begin position="10"/>
        <end position="16"/>
    </location>
</feature>
<feature type="helix" evidence="3">
    <location>
        <begin position="22"/>
        <end position="34"/>
    </location>
</feature>
<feature type="strand" evidence="3">
    <location>
        <begin position="37"/>
        <end position="40"/>
    </location>
</feature>
<feature type="strand" evidence="3">
    <location>
        <begin position="43"/>
        <end position="47"/>
    </location>
</feature>
<feature type="helix" evidence="3">
    <location>
        <begin position="53"/>
        <end position="65"/>
    </location>
</feature>
<feature type="helix" evidence="3">
    <location>
        <begin position="68"/>
        <end position="73"/>
    </location>
</feature>
<feature type="strand" evidence="3">
    <location>
        <begin position="74"/>
        <end position="87"/>
    </location>
</feature>
<feature type="helix" evidence="3">
    <location>
        <begin position="89"/>
        <end position="93"/>
    </location>
</feature>
<organism>
    <name type="scientific">Helicobacter pylori (strain ATCC 700392 / 26695)</name>
    <name type="common">Campylobacter pylori</name>
    <dbReference type="NCBI Taxonomy" id="85962"/>
    <lineage>
        <taxon>Bacteria</taxon>
        <taxon>Pseudomonadati</taxon>
        <taxon>Campylobacterota</taxon>
        <taxon>Epsilonproteobacteria</taxon>
        <taxon>Campylobacterales</taxon>
        <taxon>Helicobacteraceae</taxon>
        <taxon>Helicobacter</taxon>
    </lineage>
</organism>
<comment type="function">
    <text evidence="1">Cleaves ssRNA, mostly between U:A; cleavage is not dependent on mono- or divalent cations. Can cleave RNAs as short as 6 nucleotides.</text>
</comment>
<comment type="subunit">
    <text evidence="1">Homodimer.</text>
</comment>
<comment type="miscellaneous">
    <text>There is no VapD ortholog in strain J99.</text>
</comment>
<comment type="similarity">
    <text evidence="2">Belongs to the VapD ribonuclease family.</text>
</comment>
<sequence length="94" mass="11189">MYALAFDLKIEILKKEYGEPYNKAYDDLRQELELLGFEWTQGSVYVNYSKENTLAQVYKAINKLSQIEWFKKSVRDIRAFKVEDFSDFTEIVKS</sequence>
<dbReference type="EC" id="3.1.-.-"/>
<dbReference type="EMBL" id="U94318">
    <property type="protein sequence ID" value="AAC45241.1"/>
    <property type="molecule type" value="Genomic_DNA"/>
</dbReference>
<dbReference type="EMBL" id="AE000511">
    <property type="protein sequence ID" value="AAD07379.1"/>
    <property type="molecule type" value="Genomic_DNA"/>
</dbReference>
<dbReference type="PIR" id="C64559">
    <property type="entry name" value="C64559"/>
</dbReference>
<dbReference type="PIR" id="T09450">
    <property type="entry name" value="T09450"/>
</dbReference>
<dbReference type="RefSeq" id="NP_207113.1">
    <property type="nucleotide sequence ID" value="NC_000915.1"/>
</dbReference>
<dbReference type="RefSeq" id="WP_000271050.1">
    <property type="nucleotide sequence ID" value="NC_018939.1"/>
</dbReference>
<dbReference type="PDB" id="3UI3">
    <property type="method" value="X-ray"/>
    <property type="resolution" value="2.80 A"/>
    <property type="chains" value="A/B=1-94"/>
</dbReference>
<dbReference type="PDBsum" id="3UI3"/>
<dbReference type="SMR" id="O05728"/>
<dbReference type="STRING" id="85962.HP_0315"/>
<dbReference type="PaxDb" id="85962-C694_01590"/>
<dbReference type="EnsemblBacteria" id="AAD07379">
    <property type="protein sequence ID" value="AAD07379"/>
    <property type="gene ID" value="HP_0315"/>
</dbReference>
<dbReference type="KEGG" id="heo:C694_01590"/>
<dbReference type="KEGG" id="hpy:HP_0315"/>
<dbReference type="PATRIC" id="fig|85962.47.peg.335"/>
<dbReference type="eggNOG" id="COG3309">
    <property type="taxonomic scope" value="Bacteria"/>
</dbReference>
<dbReference type="InParanoid" id="O05728"/>
<dbReference type="OrthoDB" id="8611858at2"/>
<dbReference type="PhylomeDB" id="O05728"/>
<dbReference type="EvolutionaryTrace" id="O05728"/>
<dbReference type="Proteomes" id="UP000000429">
    <property type="component" value="Chromosome"/>
</dbReference>
<dbReference type="GO" id="GO:0004518">
    <property type="term" value="F:nuclease activity"/>
    <property type="evidence" value="ECO:0007669"/>
    <property type="project" value="UniProtKB-KW"/>
</dbReference>
<dbReference type="GO" id="GO:0003723">
    <property type="term" value="F:RNA binding"/>
    <property type="evidence" value="ECO:0007669"/>
    <property type="project" value="UniProtKB-KW"/>
</dbReference>
<dbReference type="Gene3D" id="3.30.70.240">
    <property type="match status" value="1"/>
</dbReference>
<dbReference type="InterPro" id="IPR016368">
    <property type="entry name" value="VapD"/>
</dbReference>
<dbReference type="InterPro" id="IPR019199">
    <property type="entry name" value="Virulence_VapD/CRISPR_Cas2"/>
</dbReference>
<dbReference type="Pfam" id="PF09827">
    <property type="entry name" value="CRISPR_Cas2"/>
    <property type="match status" value="1"/>
</dbReference>
<dbReference type="PIRSF" id="PIRSF002882">
    <property type="entry name" value="VapD"/>
    <property type="match status" value="1"/>
</dbReference>
<reference key="1">
    <citation type="journal article" date="1997" name="J. Bacteriol.">
        <title>High-level genetic diversity in the vapD chromosomal region of Helicobacter pylori.</title>
        <authorList>
            <person name="Cao P."/>
            <person name="Cover T.L."/>
        </authorList>
    </citation>
    <scope>NUCLEOTIDE SEQUENCE [GENOMIC DNA]</scope>
    <source>
        <strain>ATCC 49503 / 60190</strain>
    </source>
</reference>
<reference key="2">
    <citation type="journal article" date="1997" name="Nature">
        <title>The complete genome sequence of the gastric pathogen Helicobacter pylori.</title>
        <authorList>
            <person name="Tomb J.-F."/>
            <person name="White O."/>
            <person name="Kerlavage A.R."/>
            <person name="Clayton R.A."/>
            <person name="Sutton G.G."/>
            <person name="Fleischmann R.D."/>
            <person name="Ketchum K.A."/>
            <person name="Klenk H.-P."/>
            <person name="Gill S.R."/>
            <person name="Dougherty B.A."/>
            <person name="Nelson K.E."/>
            <person name="Quackenbush J."/>
            <person name="Zhou L."/>
            <person name="Kirkness E.F."/>
            <person name="Peterson S.N."/>
            <person name="Loftus B.J."/>
            <person name="Richardson D.L."/>
            <person name="Dodson R.J."/>
            <person name="Khalak H.G."/>
            <person name="Glodek A."/>
            <person name="McKenney K."/>
            <person name="FitzGerald L.M."/>
            <person name="Lee N."/>
            <person name="Adams M.D."/>
            <person name="Hickey E.K."/>
            <person name="Berg D.E."/>
            <person name="Gocayne J.D."/>
            <person name="Utterback T.R."/>
            <person name="Peterson J.D."/>
            <person name="Kelley J.M."/>
            <person name="Cotton M.D."/>
            <person name="Weidman J.F."/>
            <person name="Fujii C."/>
            <person name="Bowman C."/>
            <person name="Watthey L."/>
            <person name="Wallin E."/>
            <person name="Hayes W.S."/>
            <person name="Borodovsky M."/>
            <person name="Karp P.D."/>
            <person name="Smith H.O."/>
            <person name="Fraser C.M."/>
            <person name="Venter J.C."/>
        </authorList>
    </citation>
    <scope>NUCLEOTIDE SEQUENCE [LARGE SCALE GENOMIC DNA]</scope>
    <source>
        <strain>ATCC 700392 / 26695</strain>
    </source>
</reference>
<reference key="3">
    <citation type="journal article" date="2012" name="Nucleic Acids Res.">
        <title>Structural and biochemical characterization of HP0315 from Helicobacter pylori as a VapD protein with an endoribonuclease activity.</title>
        <authorList>
            <person name="Kwon A.R."/>
            <person name="Kim J.H."/>
            <person name="Park S.J."/>
            <person name="Lee K.Y."/>
            <person name="Min Y.H."/>
            <person name="Im H."/>
            <person name="Lee I."/>
            <person name="Lee K.Y."/>
            <person name="Lee B.J."/>
        </authorList>
    </citation>
    <scope>X-RAY CRYSTALLOGRAPHY (2.8 ANGSTROMS)</scope>
    <scope>FUNCTION AS AN ENDORIBONUCLEASE</scope>
    <scope>SUBUNIT</scope>
    <scope>MUTAGENESIS OF ASP-7; LEU-13; PHE-37; SER-43; VAL-74 AND ASP-76</scope>
    <source>
        <strain>ATCC 700392 / 26695</strain>
    </source>
</reference>
<evidence type="ECO:0000269" key="1">
    <source>
    </source>
</evidence>
<evidence type="ECO:0000305" key="2"/>
<evidence type="ECO:0007829" key="3">
    <source>
        <dbReference type="PDB" id="3UI3"/>
    </source>
</evidence>
<gene>
    <name type="primary">vapD</name>
    <name type="ordered locus">HP_0315</name>
</gene>
<protein>
    <recommendedName>
        <fullName>Endoribonuclease VapD</fullName>
        <ecNumber>3.1.-.-</ecNumber>
    </recommendedName>
    <alternativeName>
        <fullName>Virulence-associated protein D</fullName>
    </alternativeName>
</protein>
<proteinExistence type="evidence at protein level"/>
<name>VAPD_HELPY</name>
<accession>O05728</accession>